<organism>
    <name type="scientific">Shewanella baltica (strain OS185)</name>
    <dbReference type="NCBI Taxonomy" id="402882"/>
    <lineage>
        <taxon>Bacteria</taxon>
        <taxon>Pseudomonadati</taxon>
        <taxon>Pseudomonadota</taxon>
        <taxon>Gammaproteobacteria</taxon>
        <taxon>Alteromonadales</taxon>
        <taxon>Shewanellaceae</taxon>
        <taxon>Shewanella</taxon>
    </lineage>
</organism>
<evidence type="ECO:0000255" key="1">
    <source>
        <dbReference type="HAMAP-Rule" id="MF_01431"/>
    </source>
</evidence>
<protein>
    <recommendedName>
        <fullName evidence="1">Pyrimidine-specific ribonucleoside hydrolase RihA</fullName>
        <ecNumber evidence="1">3.2.-.-</ecNumber>
    </recommendedName>
    <alternativeName>
        <fullName evidence="1">Cytidine/uridine-specific hydrolase</fullName>
    </alternativeName>
</protein>
<keyword id="KW-0326">Glycosidase</keyword>
<keyword id="KW-0378">Hydrolase</keyword>
<comment type="function">
    <text evidence="1">Hydrolyzes cytidine or uridine to ribose and cytosine or uracil, respectively.</text>
</comment>
<comment type="similarity">
    <text evidence="1">Belongs to the IUNH family. RihA subfamily.</text>
</comment>
<sequence>MTRHIILDCDPGHDDAIALILALAHPNLVPLAVTTSAGNQTPDKTLNNALRILTLLNRGDIPVAGGATKPLTRELIIADNVHGETGLDGPALPEPSFSPQAITAVELMAQQIRQSTQPVTLVPTGPLTNIALLLASHSELHPKIERIVLMGGAAGVGNWTPAAEFNIFVDPEAADIVFKSGIPITMCGLDVTHQAQIMDEDIERIRAIPNPIAQCVAELLDFFMIYHRDPKWGFIGAPLHDPCTIAWLLKPELFEAQDCWVGIETQSELTLGMTVVDRYQLTGKTANATVLFGLDRLGFVDLLVDSLRVYDPTYLNRR</sequence>
<name>RIHA_SHEB8</name>
<accession>A6WSI3</accession>
<reference key="1">
    <citation type="submission" date="2007-07" db="EMBL/GenBank/DDBJ databases">
        <title>Complete sequence of chromosome of Shewanella baltica OS185.</title>
        <authorList>
            <consortium name="US DOE Joint Genome Institute"/>
            <person name="Copeland A."/>
            <person name="Lucas S."/>
            <person name="Lapidus A."/>
            <person name="Barry K."/>
            <person name="Glavina del Rio T."/>
            <person name="Dalin E."/>
            <person name="Tice H."/>
            <person name="Pitluck S."/>
            <person name="Sims D."/>
            <person name="Brettin T."/>
            <person name="Bruce D."/>
            <person name="Detter J.C."/>
            <person name="Han C."/>
            <person name="Schmutz J."/>
            <person name="Larimer F."/>
            <person name="Land M."/>
            <person name="Hauser L."/>
            <person name="Kyrpides N."/>
            <person name="Mikhailova N."/>
            <person name="Brettar I."/>
            <person name="Rodrigues J."/>
            <person name="Konstantinidis K."/>
            <person name="Tiedje J."/>
            <person name="Richardson P."/>
        </authorList>
    </citation>
    <scope>NUCLEOTIDE SEQUENCE [LARGE SCALE GENOMIC DNA]</scope>
    <source>
        <strain>OS185</strain>
    </source>
</reference>
<gene>
    <name evidence="1" type="primary">rihA</name>
    <name type="ordered locus">Shew185_3647</name>
</gene>
<proteinExistence type="inferred from homology"/>
<feature type="chain" id="PRO_1000024398" description="Pyrimidine-specific ribonucleoside hydrolase RihA">
    <location>
        <begin position="1"/>
        <end position="318"/>
    </location>
</feature>
<feature type="active site" evidence="1">
    <location>
        <position position="240"/>
    </location>
</feature>
<dbReference type="EC" id="3.2.-.-" evidence="1"/>
<dbReference type="EMBL" id="CP000753">
    <property type="protein sequence ID" value="ABS09772.1"/>
    <property type="molecule type" value="Genomic_DNA"/>
</dbReference>
<dbReference type="RefSeq" id="WP_012090177.1">
    <property type="nucleotide sequence ID" value="NC_009665.1"/>
</dbReference>
<dbReference type="SMR" id="A6WSI3"/>
<dbReference type="KEGG" id="sbm:Shew185_3647"/>
<dbReference type="HOGENOM" id="CLU_036838_2_0_6"/>
<dbReference type="GO" id="GO:0005829">
    <property type="term" value="C:cytosol"/>
    <property type="evidence" value="ECO:0007669"/>
    <property type="project" value="TreeGrafter"/>
</dbReference>
<dbReference type="GO" id="GO:0008477">
    <property type="term" value="F:purine nucleosidase activity"/>
    <property type="evidence" value="ECO:0007669"/>
    <property type="project" value="TreeGrafter"/>
</dbReference>
<dbReference type="GO" id="GO:0045437">
    <property type="term" value="F:uridine nucleosidase activity"/>
    <property type="evidence" value="ECO:0007669"/>
    <property type="project" value="InterPro"/>
</dbReference>
<dbReference type="GO" id="GO:0015949">
    <property type="term" value="P:nucleobase-containing small molecule interconversion"/>
    <property type="evidence" value="ECO:0007669"/>
    <property type="project" value="InterPro"/>
</dbReference>
<dbReference type="GO" id="GO:0006152">
    <property type="term" value="P:purine nucleoside catabolic process"/>
    <property type="evidence" value="ECO:0007669"/>
    <property type="project" value="TreeGrafter"/>
</dbReference>
<dbReference type="GO" id="GO:0006206">
    <property type="term" value="P:pyrimidine nucleobase metabolic process"/>
    <property type="evidence" value="ECO:0007669"/>
    <property type="project" value="UniProtKB-UniRule"/>
</dbReference>
<dbReference type="CDD" id="cd02651">
    <property type="entry name" value="nuc_hydro_IU_UC_XIUA"/>
    <property type="match status" value="1"/>
</dbReference>
<dbReference type="FunFam" id="3.90.245.10:FF:000001">
    <property type="entry name" value="Pyrimidine-specific ribonucleoside hydrolase RihA"/>
    <property type="match status" value="1"/>
</dbReference>
<dbReference type="Gene3D" id="3.90.245.10">
    <property type="entry name" value="Ribonucleoside hydrolase-like"/>
    <property type="match status" value="1"/>
</dbReference>
<dbReference type="HAMAP" id="MF_01431">
    <property type="entry name" value="Pyrim_hydro_RihA"/>
    <property type="match status" value="1"/>
</dbReference>
<dbReference type="InterPro" id="IPR015910">
    <property type="entry name" value="I/U_nuclsd_hydro_CS"/>
</dbReference>
<dbReference type="InterPro" id="IPR001910">
    <property type="entry name" value="Inosine/uridine_hydrolase_dom"/>
</dbReference>
<dbReference type="InterPro" id="IPR023186">
    <property type="entry name" value="IUNH"/>
</dbReference>
<dbReference type="InterPro" id="IPR022975">
    <property type="entry name" value="Pyrim_hydro_RihA"/>
</dbReference>
<dbReference type="InterPro" id="IPR036452">
    <property type="entry name" value="Ribo_hydro-like"/>
</dbReference>
<dbReference type="NCBIfam" id="NF007761">
    <property type="entry name" value="PRK10443.1"/>
    <property type="match status" value="1"/>
</dbReference>
<dbReference type="PANTHER" id="PTHR12304">
    <property type="entry name" value="INOSINE-URIDINE PREFERRING NUCLEOSIDE HYDROLASE"/>
    <property type="match status" value="1"/>
</dbReference>
<dbReference type="PANTHER" id="PTHR12304:SF4">
    <property type="entry name" value="URIDINE NUCLEOSIDASE"/>
    <property type="match status" value="1"/>
</dbReference>
<dbReference type="Pfam" id="PF01156">
    <property type="entry name" value="IU_nuc_hydro"/>
    <property type="match status" value="1"/>
</dbReference>
<dbReference type="SUPFAM" id="SSF53590">
    <property type="entry name" value="Nucleoside hydrolase"/>
    <property type="match status" value="1"/>
</dbReference>
<dbReference type="PROSITE" id="PS01247">
    <property type="entry name" value="IUNH"/>
    <property type="match status" value="1"/>
</dbReference>